<comment type="function">
    <text evidence="1">Mitochondrial GTPase that catalyzes the GTP-dependent ribosomal translocation step during translation elongation. During this step, the ribosome changes from the pre-translocational (PRE) to the post-translocational (POST) state as the newly formed A-site-bound peptidyl-tRNA and P-site-bound deacylated tRNA move to the P and E sites, respectively. Catalyzes the coordinated movement of the two tRNA molecules, the mRNA and conformational changes in the ribosome.</text>
</comment>
<comment type="pathway">
    <text evidence="1">Protein biosynthesis; polypeptide chain elongation.</text>
</comment>
<comment type="subcellular location">
    <subcellularLocation>
        <location evidence="1">Mitochondrion</location>
    </subcellularLocation>
</comment>
<comment type="similarity">
    <text evidence="2">Belongs to the TRAFAC class translation factor GTPase superfamily. Classic translation factor GTPase family. EF-G/EF-2 subfamily.</text>
</comment>
<proteinExistence type="inferred from homology"/>
<protein>
    <recommendedName>
        <fullName evidence="1">Elongation factor G, mitochondrial</fullName>
        <shortName evidence="1">EF-Gmt</shortName>
    </recommendedName>
    <alternativeName>
        <fullName evidence="1">Elongation factor G 1, mitochondrial</fullName>
        <shortName evidence="1">mEF-G 1</shortName>
    </alternativeName>
    <alternativeName>
        <fullName evidence="1">Elongation factor G1</fullName>
    </alternativeName>
</protein>
<dbReference type="EMBL" id="AAHF01000005">
    <property type="protein sequence ID" value="EAL89977.2"/>
    <property type="molecule type" value="Genomic_DNA"/>
</dbReference>
<dbReference type="RefSeq" id="XP_752015.2">
    <property type="nucleotide sequence ID" value="XM_746922.2"/>
</dbReference>
<dbReference type="SMR" id="Q4WP57"/>
<dbReference type="FunCoup" id="Q4WP57">
    <property type="interactions" value="663"/>
</dbReference>
<dbReference type="STRING" id="330879.Q4WP57"/>
<dbReference type="EnsemblFungi" id="EAL89977">
    <property type="protein sequence ID" value="EAL89977"/>
    <property type="gene ID" value="AFUA_4G08110"/>
</dbReference>
<dbReference type="GeneID" id="3508949"/>
<dbReference type="KEGG" id="afm:AFUA_4G08110"/>
<dbReference type="VEuPathDB" id="FungiDB:Afu4g08110"/>
<dbReference type="eggNOG" id="KOG0465">
    <property type="taxonomic scope" value="Eukaryota"/>
</dbReference>
<dbReference type="HOGENOM" id="CLU_002794_4_1_1"/>
<dbReference type="InParanoid" id="Q4WP57"/>
<dbReference type="OMA" id="GQFAKVQ"/>
<dbReference type="OrthoDB" id="198619at2759"/>
<dbReference type="UniPathway" id="UPA00345"/>
<dbReference type="Proteomes" id="UP000002530">
    <property type="component" value="Chromosome 4"/>
</dbReference>
<dbReference type="GO" id="GO:0005739">
    <property type="term" value="C:mitochondrion"/>
    <property type="evidence" value="ECO:0000318"/>
    <property type="project" value="GO_Central"/>
</dbReference>
<dbReference type="GO" id="GO:0005525">
    <property type="term" value="F:GTP binding"/>
    <property type="evidence" value="ECO:0007669"/>
    <property type="project" value="UniProtKB-UniRule"/>
</dbReference>
<dbReference type="GO" id="GO:0003924">
    <property type="term" value="F:GTPase activity"/>
    <property type="evidence" value="ECO:0000318"/>
    <property type="project" value="GO_Central"/>
</dbReference>
<dbReference type="GO" id="GO:0003746">
    <property type="term" value="F:translation elongation factor activity"/>
    <property type="evidence" value="ECO:0000318"/>
    <property type="project" value="GO_Central"/>
</dbReference>
<dbReference type="GO" id="GO:0070125">
    <property type="term" value="P:mitochondrial translational elongation"/>
    <property type="evidence" value="ECO:0000318"/>
    <property type="project" value="GO_Central"/>
</dbReference>
<dbReference type="CDD" id="cd01886">
    <property type="entry name" value="EF-G"/>
    <property type="match status" value="1"/>
</dbReference>
<dbReference type="CDD" id="cd16262">
    <property type="entry name" value="EFG_III"/>
    <property type="match status" value="1"/>
</dbReference>
<dbReference type="CDD" id="cd01434">
    <property type="entry name" value="EFG_mtEFG1_IV"/>
    <property type="match status" value="1"/>
</dbReference>
<dbReference type="CDD" id="cd04091">
    <property type="entry name" value="mtEFG1_II_like"/>
    <property type="match status" value="1"/>
</dbReference>
<dbReference type="FunFam" id="3.30.230.10:FF:000003">
    <property type="entry name" value="Elongation factor G"/>
    <property type="match status" value="1"/>
</dbReference>
<dbReference type="FunFam" id="3.30.70.870:FF:000001">
    <property type="entry name" value="Elongation factor G"/>
    <property type="match status" value="1"/>
</dbReference>
<dbReference type="FunFam" id="2.40.30.10:FF:000022">
    <property type="entry name" value="Elongation factor G, mitochondrial"/>
    <property type="match status" value="1"/>
</dbReference>
<dbReference type="FunFam" id="3.30.70.240:FF:000015">
    <property type="entry name" value="Elongation factor G, mitochondrial"/>
    <property type="match status" value="1"/>
</dbReference>
<dbReference type="FunFam" id="3.40.50.300:FF:000558">
    <property type="entry name" value="Elongation factor G, mitochondrial"/>
    <property type="match status" value="1"/>
</dbReference>
<dbReference type="Gene3D" id="3.30.230.10">
    <property type="match status" value="1"/>
</dbReference>
<dbReference type="Gene3D" id="3.30.70.240">
    <property type="match status" value="1"/>
</dbReference>
<dbReference type="Gene3D" id="3.30.70.870">
    <property type="entry name" value="Elongation Factor G (Translational Gtpase), domain 3"/>
    <property type="match status" value="1"/>
</dbReference>
<dbReference type="Gene3D" id="3.40.50.300">
    <property type="entry name" value="P-loop containing nucleotide triphosphate hydrolases"/>
    <property type="match status" value="1"/>
</dbReference>
<dbReference type="Gene3D" id="2.40.30.10">
    <property type="entry name" value="Translation factors"/>
    <property type="match status" value="1"/>
</dbReference>
<dbReference type="HAMAP" id="MF_00054_B">
    <property type="entry name" value="EF_G_EF_2_B"/>
    <property type="match status" value="1"/>
</dbReference>
<dbReference type="InterPro" id="IPR041095">
    <property type="entry name" value="EFG_II"/>
</dbReference>
<dbReference type="InterPro" id="IPR009022">
    <property type="entry name" value="EFG_III"/>
</dbReference>
<dbReference type="InterPro" id="IPR035647">
    <property type="entry name" value="EFG_III/V"/>
</dbReference>
<dbReference type="InterPro" id="IPR047872">
    <property type="entry name" value="EFG_IV"/>
</dbReference>
<dbReference type="InterPro" id="IPR000640">
    <property type="entry name" value="EFG_V-like"/>
</dbReference>
<dbReference type="InterPro" id="IPR004161">
    <property type="entry name" value="EFTu-like_2"/>
</dbReference>
<dbReference type="InterPro" id="IPR031157">
    <property type="entry name" value="G_TR_CS"/>
</dbReference>
<dbReference type="InterPro" id="IPR027417">
    <property type="entry name" value="P-loop_NTPase"/>
</dbReference>
<dbReference type="InterPro" id="IPR020568">
    <property type="entry name" value="Ribosomal_Su5_D2-typ_SF"/>
</dbReference>
<dbReference type="InterPro" id="IPR014721">
    <property type="entry name" value="Ribsml_uS5_D2-typ_fold_subgr"/>
</dbReference>
<dbReference type="InterPro" id="IPR005225">
    <property type="entry name" value="Small_GTP-bd"/>
</dbReference>
<dbReference type="InterPro" id="IPR000795">
    <property type="entry name" value="T_Tr_GTP-bd_dom"/>
</dbReference>
<dbReference type="InterPro" id="IPR009000">
    <property type="entry name" value="Transl_B-barrel_sf"/>
</dbReference>
<dbReference type="InterPro" id="IPR004540">
    <property type="entry name" value="Transl_elong_EFG/EF2"/>
</dbReference>
<dbReference type="InterPro" id="IPR005517">
    <property type="entry name" value="Transl_elong_EFG/EF2_IV"/>
</dbReference>
<dbReference type="NCBIfam" id="TIGR00484">
    <property type="entry name" value="EF-G"/>
    <property type="match status" value="1"/>
</dbReference>
<dbReference type="NCBIfam" id="NF009381">
    <property type="entry name" value="PRK12740.1-5"/>
    <property type="match status" value="1"/>
</dbReference>
<dbReference type="NCBIfam" id="TIGR00231">
    <property type="entry name" value="small_GTP"/>
    <property type="match status" value="1"/>
</dbReference>
<dbReference type="PANTHER" id="PTHR43636">
    <property type="entry name" value="ELONGATION FACTOR G, MITOCHONDRIAL"/>
    <property type="match status" value="1"/>
</dbReference>
<dbReference type="PANTHER" id="PTHR43636:SF2">
    <property type="entry name" value="ELONGATION FACTOR G, MITOCHONDRIAL"/>
    <property type="match status" value="1"/>
</dbReference>
<dbReference type="Pfam" id="PF00679">
    <property type="entry name" value="EFG_C"/>
    <property type="match status" value="1"/>
</dbReference>
<dbReference type="Pfam" id="PF14492">
    <property type="entry name" value="EFG_III"/>
    <property type="match status" value="1"/>
</dbReference>
<dbReference type="Pfam" id="PF03764">
    <property type="entry name" value="EFG_IV"/>
    <property type="match status" value="1"/>
</dbReference>
<dbReference type="Pfam" id="PF00009">
    <property type="entry name" value="GTP_EFTU"/>
    <property type="match status" value="1"/>
</dbReference>
<dbReference type="Pfam" id="PF03144">
    <property type="entry name" value="GTP_EFTU_D2"/>
    <property type="match status" value="1"/>
</dbReference>
<dbReference type="PRINTS" id="PR00315">
    <property type="entry name" value="ELONGATNFCT"/>
</dbReference>
<dbReference type="SMART" id="SM00838">
    <property type="entry name" value="EFG_C"/>
    <property type="match status" value="1"/>
</dbReference>
<dbReference type="SMART" id="SM00889">
    <property type="entry name" value="EFG_IV"/>
    <property type="match status" value="1"/>
</dbReference>
<dbReference type="SUPFAM" id="SSF54980">
    <property type="entry name" value="EF-G C-terminal domain-like"/>
    <property type="match status" value="2"/>
</dbReference>
<dbReference type="SUPFAM" id="SSF52540">
    <property type="entry name" value="P-loop containing nucleoside triphosphate hydrolases"/>
    <property type="match status" value="1"/>
</dbReference>
<dbReference type="SUPFAM" id="SSF54211">
    <property type="entry name" value="Ribosomal protein S5 domain 2-like"/>
    <property type="match status" value="1"/>
</dbReference>
<dbReference type="SUPFAM" id="SSF50447">
    <property type="entry name" value="Translation proteins"/>
    <property type="match status" value="1"/>
</dbReference>
<dbReference type="PROSITE" id="PS00301">
    <property type="entry name" value="G_TR_1"/>
    <property type="match status" value="1"/>
</dbReference>
<dbReference type="PROSITE" id="PS51722">
    <property type="entry name" value="G_TR_2"/>
    <property type="match status" value="1"/>
</dbReference>
<reference key="1">
    <citation type="journal article" date="2005" name="Nature">
        <title>Genomic sequence of the pathogenic and allergenic filamentous fungus Aspergillus fumigatus.</title>
        <authorList>
            <person name="Nierman W.C."/>
            <person name="Pain A."/>
            <person name="Anderson M.J."/>
            <person name="Wortman J.R."/>
            <person name="Kim H.S."/>
            <person name="Arroyo J."/>
            <person name="Berriman M."/>
            <person name="Abe K."/>
            <person name="Archer D.B."/>
            <person name="Bermejo C."/>
            <person name="Bennett J.W."/>
            <person name="Bowyer P."/>
            <person name="Chen D."/>
            <person name="Collins M."/>
            <person name="Coulsen R."/>
            <person name="Davies R."/>
            <person name="Dyer P.S."/>
            <person name="Farman M.L."/>
            <person name="Fedorova N."/>
            <person name="Fedorova N.D."/>
            <person name="Feldblyum T.V."/>
            <person name="Fischer R."/>
            <person name="Fosker N."/>
            <person name="Fraser A."/>
            <person name="Garcia J.L."/>
            <person name="Garcia M.J."/>
            <person name="Goble A."/>
            <person name="Goldman G.H."/>
            <person name="Gomi K."/>
            <person name="Griffith-Jones S."/>
            <person name="Gwilliam R."/>
            <person name="Haas B.J."/>
            <person name="Haas H."/>
            <person name="Harris D.E."/>
            <person name="Horiuchi H."/>
            <person name="Huang J."/>
            <person name="Humphray S."/>
            <person name="Jimenez J."/>
            <person name="Keller N."/>
            <person name="Khouri H."/>
            <person name="Kitamoto K."/>
            <person name="Kobayashi T."/>
            <person name="Konzack S."/>
            <person name="Kulkarni R."/>
            <person name="Kumagai T."/>
            <person name="Lafton A."/>
            <person name="Latge J.-P."/>
            <person name="Li W."/>
            <person name="Lord A."/>
            <person name="Lu C."/>
            <person name="Majoros W.H."/>
            <person name="May G.S."/>
            <person name="Miller B.L."/>
            <person name="Mohamoud Y."/>
            <person name="Molina M."/>
            <person name="Monod M."/>
            <person name="Mouyna I."/>
            <person name="Mulligan S."/>
            <person name="Murphy L.D."/>
            <person name="O'Neil S."/>
            <person name="Paulsen I."/>
            <person name="Penalva M.A."/>
            <person name="Pertea M."/>
            <person name="Price C."/>
            <person name="Pritchard B.L."/>
            <person name="Quail M.A."/>
            <person name="Rabbinowitsch E."/>
            <person name="Rawlins N."/>
            <person name="Rajandream M.A."/>
            <person name="Reichard U."/>
            <person name="Renauld H."/>
            <person name="Robson G.D."/>
            <person name="Rodriguez de Cordoba S."/>
            <person name="Rodriguez-Pena J.M."/>
            <person name="Ronning C.M."/>
            <person name="Rutter S."/>
            <person name="Salzberg S.L."/>
            <person name="Sanchez M."/>
            <person name="Sanchez-Ferrero J.C."/>
            <person name="Saunders D."/>
            <person name="Seeger K."/>
            <person name="Squares R."/>
            <person name="Squares S."/>
            <person name="Takeuchi M."/>
            <person name="Tekaia F."/>
            <person name="Turner G."/>
            <person name="Vazquez de Aldana C.R."/>
            <person name="Weidman J."/>
            <person name="White O."/>
            <person name="Woodward J.R."/>
            <person name="Yu J.-H."/>
            <person name="Fraser C.M."/>
            <person name="Galagan J.E."/>
            <person name="Asai K."/>
            <person name="Machida M."/>
            <person name="Hall N."/>
            <person name="Barrell B.G."/>
            <person name="Denning D.W."/>
        </authorList>
    </citation>
    <scope>NUCLEOTIDE SEQUENCE [LARGE SCALE GENOMIC DNA]</scope>
    <source>
        <strain>ATCC MYA-4609 / CBS 101355 / FGSC A1100 / Af293</strain>
    </source>
</reference>
<sequence length="802" mass="89220">MRCPSLARLPNRALSGLTRSPVRLQSQNFLYQRCASTAALRSPIAGPAYQSVFHRHNLQRRNASAATTAAVLEAAASNPDGLSQEAIIDNLDPAEAIRLSRLRNIGIAAHIDSGKTTCTERVLFYTGRIKAIHEVRGRDNVGAKMDSMDLEREKGITIQSAATFCDWIKKGDDGKEEKYHINLIDTPGHIDFTIEVERALRVLDGAVMILCAVSGVQSQTITVDRQMRRYNVPRISFVNKMDRMGANPFKAVEQINTKLKIPAAAVQVPIGAEDEFEGVVDLIRMKSIYNDGPNGETVVVKDEIPEKVKSVVEERRRMLIETLADVDDEIAELFLEETEPTEQQLKAAIRRATIGLKFTPVFMGSALANKSVQPMLDGVIDYLPNPSEVENLALDRKRDEASVKLVPYNSQPFVGLAFKLEESNFGQLTYIRVYQGTLRKGANVFNARNNKKVKVPRIVRMHSNEMEEVSEIGAGEICAVFGVDCASGDTFTDGQLGYTMTSMFVPEPVISLSIKPKNSKDSANFSKAMARFQREDPTFRVSYNAESEETLISGMGELHLDIYIERMRREYRVDCVTGPPQVAYRETIGNRVEFDHLLKKQSGGPGEYARVVGWMEPTGKLEDNKFEEQIVGGSISEKFLFACEKGFNLACEKGPLIGHKVLGTKMVINDGATHMTDSSEMSFKNATQQAFRKAFMESNPSVLEPMMKIAVTAPGEFQGDVISLLNKRNATINDTETGVDEFTVYADCSLNGMFGFSTHLRAATQGKGEFTMEFSHYEKAQPQLQKELIQKYLKAQADRHKK</sequence>
<evidence type="ECO:0000255" key="1">
    <source>
        <dbReference type="HAMAP-Rule" id="MF_03061"/>
    </source>
</evidence>
<evidence type="ECO:0000305" key="2"/>
<name>EFGM_ASPFU</name>
<feature type="transit peptide" description="Mitochondrion" evidence="1">
    <location>
        <begin position="1"/>
        <end position="24"/>
    </location>
</feature>
<feature type="chain" id="PRO_0000385559" description="Elongation factor G, mitochondrial">
    <location>
        <begin position="25"/>
        <end position="802"/>
    </location>
</feature>
<feature type="domain" description="tr-type G">
    <location>
        <begin position="100"/>
        <end position="387"/>
    </location>
</feature>
<feature type="binding site" evidence="1">
    <location>
        <begin position="109"/>
        <end position="116"/>
    </location>
    <ligand>
        <name>GTP</name>
        <dbReference type="ChEBI" id="CHEBI:37565"/>
    </ligand>
</feature>
<feature type="binding site" evidence="1">
    <location>
        <begin position="185"/>
        <end position="189"/>
    </location>
    <ligand>
        <name>GTP</name>
        <dbReference type="ChEBI" id="CHEBI:37565"/>
    </ligand>
</feature>
<feature type="binding site" evidence="1">
    <location>
        <begin position="239"/>
        <end position="242"/>
    </location>
    <ligand>
        <name>GTP</name>
        <dbReference type="ChEBI" id="CHEBI:37565"/>
    </ligand>
</feature>
<keyword id="KW-0251">Elongation factor</keyword>
<keyword id="KW-0342">GTP-binding</keyword>
<keyword id="KW-0496">Mitochondrion</keyword>
<keyword id="KW-0547">Nucleotide-binding</keyword>
<keyword id="KW-0648">Protein biosynthesis</keyword>
<keyword id="KW-1185">Reference proteome</keyword>
<keyword id="KW-0809">Transit peptide</keyword>
<gene>
    <name type="primary">mef1</name>
    <name type="ORF">AFUA_4G08110</name>
</gene>
<accession>Q4WP57</accession>
<organism>
    <name type="scientific">Aspergillus fumigatus (strain ATCC MYA-4609 / CBS 101355 / FGSC A1100 / Af293)</name>
    <name type="common">Neosartorya fumigata</name>
    <dbReference type="NCBI Taxonomy" id="330879"/>
    <lineage>
        <taxon>Eukaryota</taxon>
        <taxon>Fungi</taxon>
        <taxon>Dikarya</taxon>
        <taxon>Ascomycota</taxon>
        <taxon>Pezizomycotina</taxon>
        <taxon>Eurotiomycetes</taxon>
        <taxon>Eurotiomycetidae</taxon>
        <taxon>Eurotiales</taxon>
        <taxon>Aspergillaceae</taxon>
        <taxon>Aspergillus</taxon>
        <taxon>Aspergillus subgen. Fumigati</taxon>
    </lineage>
</organism>